<feature type="initiator methionine" description="Removed" evidence="1">
    <location>
        <position position="1"/>
    </location>
</feature>
<feature type="chain" id="PRO_0000371593" description="Small ribosomal subunit protein uS2">
    <location>
        <begin position="2"/>
        <end position="299"/>
    </location>
</feature>
<feature type="region of interest" description="Disordered" evidence="2">
    <location>
        <begin position="210"/>
        <end position="299"/>
    </location>
</feature>
<feature type="compositionally biased region" description="Polar residues" evidence="2">
    <location>
        <begin position="275"/>
        <end position="285"/>
    </location>
</feature>
<evidence type="ECO:0000255" key="1">
    <source>
        <dbReference type="HAMAP-Rule" id="MF_03015"/>
    </source>
</evidence>
<evidence type="ECO:0000256" key="2">
    <source>
        <dbReference type="SAM" id="MobiDB-lite"/>
    </source>
</evidence>
<evidence type="ECO:0000305" key="3"/>
<accession>A6NA00</accession>
<reference key="1">
    <citation type="journal article" date="2008" name="Insect Biochem. Mol. Biol.">
        <title>An insight into the sialome of the soft tick, Ornithodorus parkeri.</title>
        <authorList>
            <person name="Francischetti I.M.B."/>
            <person name="Mans B.J."/>
            <person name="Meng Z."/>
            <person name="Gudderra N."/>
            <person name="Veenstra T.D."/>
            <person name="Pham V.M."/>
            <person name="Ribeiro J.M.C."/>
        </authorList>
    </citation>
    <scope>NUCLEOTIDE SEQUENCE [LARGE SCALE MRNA]</scope>
    <source>
        <tissue>Salivary gland</tissue>
    </source>
</reference>
<comment type="function">
    <text evidence="1">Required for the assembly and/or stability of the 40S ribosomal subunit. Required for the processing of the 20S rRNA-precursor to mature 18S rRNA in a late step of the maturation of 40S ribosomal subunits.</text>
</comment>
<comment type="subunit">
    <text evidence="1">Component of the small ribosomal subunit. Mature ribosomes consist of a small (40S) and a large (60S) subunit. The 40S subunit contains about 33 different proteins and 1 molecule of RNA (18S). The 60S subunit contains about 49 different proteins and 3 molecules of RNA (28S, 5.8S and 5S). Interacts with ribosomal protein S21.</text>
</comment>
<comment type="subcellular location">
    <subcellularLocation>
        <location evidence="1">Cytoplasm</location>
    </subcellularLocation>
</comment>
<comment type="similarity">
    <text evidence="1">Belongs to the universal ribosomal protein uS2 family.</text>
</comment>
<sequence>MSGGLSVLGLKDDDVRRFLTAKTHIGTAQLDFQMQQYCFKRRSDGVYLIDLKKTWEKLLLAARAIVAIENPAEVCAISSRPYGQRAVLKFASFTGATPIAGRFTPGTFTNQIQAAFREPRLLVVCDPREDHQPVTEASYVNIPVIAFCNTDACLRYVDVAIPCNNKAQHSIGLMWWMLTREVLRMRGSIIREIPWDTMVDLFFYRDPEEAEKEEQTQVVPERSIKEAPEFPPDQWGVGDTAAVQPEVADWSTAAEIPFQSAPAPAPAPAPATDDWASTGTATVGPTTEWGAATDNSWAS</sequence>
<organism>
    <name type="scientific">Ornithodoros parkeri</name>
    <name type="common">Soft tick</name>
    <name type="synonym">Argasid tick</name>
    <dbReference type="NCBI Taxonomy" id="140564"/>
    <lineage>
        <taxon>Eukaryota</taxon>
        <taxon>Metazoa</taxon>
        <taxon>Ecdysozoa</taxon>
        <taxon>Arthropoda</taxon>
        <taxon>Chelicerata</taxon>
        <taxon>Arachnida</taxon>
        <taxon>Acari</taxon>
        <taxon>Parasitiformes</taxon>
        <taxon>Ixodida</taxon>
        <taxon>Ixodoidea</taxon>
        <taxon>Argasidae</taxon>
        <taxon>Ornithodorinae</taxon>
        <taxon>Ornithodoros</taxon>
    </lineage>
</organism>
<keyword id="KW-0963">Cytoplasm</keyword>
<keyword id="KW-0687">Ribonucleoprotein</keyword>
<keyword id="KW-0689">Ribosomal protein</keyword>
<dbReference type="EMBL" id="EF633966">
    <property type="protein sequence ID" value="ABR23483.1"/>
    <property type="molecule type" value="mRNA"/>
</dbReference>
<dbReference type="SMR" id="A6NA00"/>
<dbReference type="GO" id="GO:0022627">
    <property type="term" value="C:cytosolic small ribosomal subunit"/>
    <property type="evidence" value="ECO:0007669"/>
    <property type="project" value="UniProtKB-UniRule"/>
</dbReference>
<dbReference type="GO" id="GO:0003735">
    <property type="term" value="F:structural constituent of ribosome"/>
    <property type="evidence" value="ECO:0007669"/>
    <property type="project" value="UniProtKB-UniRule"/>
</dbReference>
<dbReference type="GO" id="GO:0000028">
    <property type="term" value="P:ribosomal small subunit assembly"/>
    <property type="evidence" value="ECO:0007669"/>
    <property type="project" value="UniProtKB-UniRule"/>
</dbReference>
<dbReference type="GO" id="GO:0006412">
    <property type="term" value="P:translation"/>
    <property type="evidence" value="ECO:0007669"/>
    <property type="project" value="UniProtKB-UniRule"/>
</dbReference>
<dbReference type="CDD" id="cd01425">
    <property type="entry name" value="RPS2"/>
    <property type="match status" value="1"/>
</dbReference>
<dbReference type="FunFam" id="3.40.50.10490:FF:000012">
    <property type="entry name" value="40S ribosomal protein SA"/>
    <property type="match status" value="1"/>
</dbReference>
<dbReference type="Gene3D" id="3.40.50.10490">
    <property type="entry name" value="Glucose-6-phosphate isomerase like protein, domain 1"/>
    <property type="match status" value="1"/>
</dbReference>
<dbReference type="HAMAP" id="MF_03015">
    <property type="entry name" value="Ribosomal_S2_euk"/>
    <property type="match status" value="1"/>
</dbReference>
<dbReference type="InterPro" id="IPR001865">
    <property type="entry name" value="Ribosomal_uS2"/>
</dbReference>
<dbReference type="InterPro" id="IPR032281">
    <property type="entry name" value="Ribosomal_uS2_C"/>
</dbReference>
<dbReference type="InterPro" id="IPR018130">
    <property type="entry name" value="Ribosomal_uS2_CS"/>
</dbReference>
<dbReference type="InterPro" id="IPR027498">
    <property type="entry name" value="Ribosomal_uS2_euk"/>
</dbReference>
<dbReference type="InterPro" id="IPR005707">
    <property type="entry name" value="Ribosomal_uS2_euk/arc"/>
</dbReference>
<dbReference type="InterPro" id="IPR023591">
    <property type="entry name" value="Ribosomal_uS2_flav_dom_sf"/>
</dbReference>
<dbReference type="NCBIfam" id="TIGR01012">
    <property type="entry name" value="uS2_euk_arch"/>
    <property type="match status" value="1"/>
</dbReference>
<dbReference type="PANTHER" id="PTHR11489">
    <property type="entry name" value="40S RIBOSOMAL PROTEIN SA"/>
    <property type="match status" value="1"/>
</dbReference>
<dbReference type="Pfam" id="PF16122">
    <property type="entry name" value="40S_SA_C"/>
    <property type="match status" value="1"/>
</dbReference>
<dbReference type="Pfam" id="PF00318">
    <property type="entry name" value="Ribosomal_S2"/>
    <property type="match status" value="2"/>
</dbReference>
<dbReference type="PRINTS" id="PR00395">
    <property type="entry name" value="RIBOSOMALS2"/>
</dbReference>
<dbReference type="SUPFAM" id="SSF52313">
    <property type="entry name" value="Ribosomal protein S2"/>
    <property type="match status" value="1"/>
</dbReference>
<dbReference type="PROSITE" id="PS00963">
    <property type="entry name" value="RIBOSOMAL_S2_2"/>
    <property type="match status" value="1"/>
</dbReference>
<name>RSSA_ORNPR</name>
<protein>
    <recommendedName>
        <fullName evidence="1">Small ribosomal subunit protein uS2</fullName>
    </recommendedName>
    <alternativeName>
        <fullName evidence="3">40S ribosomal protein SA</fullName>
    </alternativeName>
</protein>
<proteinExistence type="evidence at transcript level"/>